<comment type="function">
    <text evidence="1">Catalyzes the conversion of dihydroorotate to orotate with quinone as electron acceptor.</text>
</comment>
<comment type="catalytic activity">
    <reaction evidence="1">
        <text>(S)-dihydroorotate + a quinone = orotate + a quinol</text>
        <dbReference type="Rhea" id="RHEA:30187"/>
        <dbReference type="ChEBI" id="CHEBI:24646"/>
        <dbReference type="ChEBI" id="CHEBI:30839"/>
        <dbReference type="ChEBI" id="CHEBI:30864"/>
        <dbReference type="ChEBI" id="CHEBI:132124"/>
        <dbReference type="EC" id="1.3.5.2"/>
    </reaction>
</comment>
<comment type="cofactor">
    <cofactor evidence="1">
        <name>FMN</name>
        <dbReference type="ChEBI" id="CHEBI:58210"/>
    </cofactor>
    <text evidence="1">Binds 1 FMN per subunit.</text>
</comment>
<comment type="pathway">
    <text evidence="1">Pyrimidine metabolism; UMP biosynthesis via de novo pathway; orotate from (S)-dihydroorotate (quinone route): step 1/1.</text>
</comment>
<comment type="subunit">
    <text evidence="1">Monomer.</text>
</comment>
<comment type="subcellular location">
    <subcellularLocation>
        <location evidence="1">Cell membrane</location>
        <topology evidence="1">Peripheral membrane protein</topology>
    </subcellularLocation>
</comment>
<comment type="similarity">
    <text evidence="1">Belongs to the dihydroorotate dehydrogenase family. Type 2 subfamily.</text>
</comment>
<reference key="1">
    <citation type="journal article" date="2009" name="J. Bacteriol.">
        <title>The complete genome sequence of Helicobacter pylori strain G27.</title>
        <authorList>
            <person name="Baltrus D.A."/>
            <person name="Amieva M.R."/>
            <person name="Covacci A."/>
            <person name="Lowe T.M."/>
            <person name="Merrell D.S."/>
            <person name="Ottemann K.M."/>
            <person name="Stein M."/>
            <person name="Salama N.R."/>
            <person name="Guillemin K."/>
        </authorList>
    </citation>
    <scope>NUCLEOTIDE SEQUENCE [LARGE SCALE GENOMIC DNA]</scope>
    <source>
        <strain>G27</strain>
    </source>
</reference>
<evidence type="ECO:0000255" key="1">
    <source>
        <dbReference type="HAMAP-Rule" id="MF_00225"/>
    </source>
</evidence>
<evidence type="ECO:0007829" key="2">
    <source>
        <dbReference type="PDB" id="6B8S"/>
    </source>
</evidence>
<keyword id="KW-0002">3D-structure</keyword>
<keyword id="KW-1003">Cell membrane</keyword>
<keyword id="KW-0285">Flavoprotein</keyword>
<keyword id="KW-0288">FMN</keyword>
<keyword id="KW-0472">Membrane</keyword>
<keyword id="KW-0560">Oxidoreductase</keyword>
<keyword id="KW-0665">Pyrimidine biosynthesis</keyword>
<keyword id="KW-1185">Reference proteome</keyword>
<name>PYRD_HELPG</name>
<protein>
    <recommendedName>
        <fullName evidence="1">Dihydroorotate dehydrogenase (quinone)</fullName>
        <ecNumber evidence="1">1.3.5.2</ecNumber>
    </recommendedName>
    <alternativeName>
        <fullName evidence="1">DHOdehase</fullName>
        <shortName evidence="1">DHOD</shortName>
        <shortName evidence="1">DHODase</shortName>
    </alternativeName>
    <alternativeName>
        <fullName evidence="1">Dihydroorotate oxidase</fullName>
    </alternativeName>
</protein>
<accession>B5Z6I2</accession>
<dbReference type="EC" id="1.3.5.2" evidence="1"/>
<dbReference type="EMBL" id="CP001173">
    <property type="protein sequence ID" value="ACI27181.1"/>
    <property type="molecule type" value="Genomic_DNA"/>
</dbReference>
<dbReference type="RefSeq" id="WP_000966728.1">
    <property type="nucleotide sequence ID" value="NC_011333.1"/>
</dbReference>
<dbReference type="PDB" id="6B8S">
    <property type="method" value="X-ray"/>
    <property type="resolution" value="2.25 A"/>
    <property type="chains" value="A/B=1-351"/>
</dbReference>
<dbReference type="PDBsum" id="6B8S"/>
<dbReference type="SMR" id="B5Z6I2"/>
<dbReference type="KEGG" id="hpg:HPG27_417"/>
<dbReference type="HOGENOM" id="CLU_013640_2_0_7"/>
<dbReference type="UniPathway" id="UPA00070">
    <property type="reaction ID" value="UER00946"/>
</dbReference>
<dbReference type="Proteomes" id="UP000001735">
    <property type="component" value="Chromosome"/>
</dbReference>
<dbReference type="GO" id="GO:0005737">
    <property type="term" value="C:cytoplasm"/>
    <property type="evidence" value="ECO:0007669"/>
    <property type="project" value="InterPro"/>
</dbReference>
<dbReference type="GO" id="GO:0005886">
    <property type="term" value="C:plasma membrane"/>
    <property type="evidence" value="ECO:0007669"/>
    <property type="project" value="UniProtKB-SubCell"/>
</dbReference>
<dbReference type="GO" id="GO:0106430">
    <property type="term" value="F:dihydroorotate dehydrogenase (quinone) activity"/>
    <property type="evidence" value="ECO:0007669"/>
    <property type="project" value="UniProtKB-EC"/>
</dbReference>
<dbReference type="GO" id="GO:0006207">
    <property type="term" value="P:'de novo' pyrimidine nucleobase biosynthetic process"/>
    <property type="evidence" value="ECO:0007669"/>
    <property type="project" value="InterPro"/>
</dbReference>
<dbReference type="GO" id="GO:0044205">
    <property type="term" value="P:'de novo' UMP biosynthetic process"/>
    <property type="evidence" value="ECO:0007669"/>
    <property type="project" value="UniProtKB-UniRule"/>
</dbReference>
<dbReference type="CDD" id="cd04738">
    <property type="entry name" value="DHOD_2_like"/>
    <property type="match status" value="1"/>
</dbReference>
<dbReference type="FunFam" id="3.20.20.70:FF:000319">
    <property type="entry name" value="Dihydroorotate dehydrogenase (quinone)"/>
    <property type="match status" value="1"/>
</dbReference>
<dbReference type="Gene3D" id="3.20.20.70">
    <property type="entry name" value="Aldolase class I"/>
    <property type="match status" value="1"/>
</dbReference>
<dbReference type="HAMAP" id="MF_00225">
    <property type="entry name" value="DHO_dh_type2"/>
    <property type="match status" value="1"/>
</dbReference>
<dbReference type="InterPro" id="IPR013785">
    <property type="entry name" value="Aldolase_TIM"/>
</dbReference>
<dbReference type="InterPro" id="IPR050074">
    <property type="entry name" value="DHO_dehydrogenase"/>
</dbReference>
<dbReference type="InterPro" id="IPR012135">
    <property type="entry name" value="Dihydroorotate_DH_1_2"/>
</dbReference>
<dbReference type="InterPro" id="IPR005719">
    <property type="entry name" value="Dihydroorotate_DH_2"/>
</dbReference>
<dbReference type="InterPro" id="IPR005720">
    <property type="entry name" value="Dihydroorotate_DH_cat"/>
</dbReference>
<dbReference type="InterPro" id="IPR001295">
    <property type="entry name" value="Dihydroorotate_DH_CS"/>
</dbReference>
<dbReference type="NCBIfam" id="NF003649">
    <property type="entry name" value="PRK05286.2-2"/>
    <property type="match status" value="1"/>
</dbReference>
<dbReference type="NCBIfam" id="NF003652">
    <property type="entry name" value="PRK05286.2-5"/>
    <property type="match status" value="1"/>
</dbReference>
<dbReference type="NCBIfam" id="TIGR01036">
    <property type="entry name" value="pyrD_sub2"/>
    <property type="match status" value="1"/>
</dbReference>
<dbReference type="PANTHER" id="PTHR48109:SF4">
    <property type="entry name" value="DIHYDROOROTATE DEHYDROGENASE (QUINONE), MITOCHONDRIAL"/>
    <property type="match status" value="1"/>
</dbReference>
<dbReference type="PANTHER" id="PTHR48109">
    <property type="entry name" value="DIHYDROOROTATE DEHYDROGENASE (QUINONE), MITOCHONDRIAL-RELATED"/>
    <property type="match status" value="1"/>
</dbReference>
<dbReference type="Pfam" id="PF01180">
    <property type="entry name" value="DHO_dh"/>
    <property type="match status" value="1"/>
</dbReference>
<dbReference type="PIRSF" id="PIRSF000164">
    <property type="entry name" value="DHO_oxidase"/>
    <property type="match status" value="1"/>
</dbReference>
<dbReference type="SUPFAM" id="SSF51395">
    <property type="entry name" value="FMN-linked oxidoreductases"/>
    <property type="match status" value="1"/>
</dbReference>
<dbReference type="PROSITE" id="PS00911">
    <property type="entry name" value="DHODEHASE_1"/>
    <property type="match status" value="1"/>
</dbReference>
<dbReference type="PROSITE" id="PS00912">
    <property type="entry name" value="DHODEHASE_2"/>
    <property type="match status" value="1"/>
</dbReference>
<gene>
    <name evidence="1" type="primary">pyrD</name>
    <name type="ordered locus">HPG27_417</name>
</gene>
<proteinExistence type="evidence at protein level"/>
<feature type="chain" id="PRO_1000100267" description="Dihydroorotate dehydrogenase (quinone)">
    <location>
        <begin position="1"/>
        <end position="351"/>
    </location>
</feature>
<feature type="active site" description="Nucleophile" evidence="1">
    <location>
        <position position="181"/>
    </location>
</feature>
<feature type="binding site" evidence="1">
    <location>
        <begin position="67"/>
        <end position="71"/>
    </location>
    <ligand>
        <name>FMN</name>
        <dbReference type="ChEBI" id="CHEBI:58210"/>
    </ligand>
</feature>
<feature type="binding site" evidence="1">
    <location>
        <position position="71"/>
    </location>
    <ligand>
        <name>substrate</name>
    </ligand>
</feature>
<feature type="binding site" evidence="1">
    <location>
        <position position="91"/>
    </location>
    <ligand>
        <name>FMN</name>
        <dbReference type="ChEBI" id="CHEBI:58210"/>
    </ligand>
</feature>
<feature type="binding site" evidence="1">
    <location>
        <begin position="116"/>
        <end position="120"/>
    </location>
    <ligand>
        <name>substrate</name>
    </ligand>
</feature>
<feature type="binding site" evidence="1">
    <location>
        <position position="145"/>
    </location>
    <ligand>
        <name>FMN</name>
        <dbReference type="ChEBI" id="CHEBI:58210"/>
    </ligand>
</feature>
<feature type="binding site" evidence="1">
    <location>
        <position position="178"/>
    </location>
    <ligand>
        <name>FMN</name>
        <dbReference type="ChEBI" id="CHEBI:58210"/>
    </ligand>
</feature>
<feature type="binding site" evidence="1">
    <location>
        <position position="178"/>
    </location>
    <ligand>
        <name>substrate</name>
    </ligand>
</feature>
<feature type="binding site" evidence="1">
    <location>
        <position position="183"/>
    </location>
    <ligand>
        <name>substrate</name>
    </ligand>
</feature>
<feature type="binding site" evidence="1">
    <location>
        <position position="214"/>
    </location>
    <ligand>
        <name>FMN</name>
        <dbReference type="ChEBI" id="CHEBI:58210"/>
    </ligand>
</feature>
<feature type="binding site" evidence="1">
    <location>
        <position position="242"/>
    </location>
    <ligand>
        <name>FMN</name>
        <dbReference type="ChEBI" id="CHEBI:58210"/>
    </ligand>
</feature>
<feature type="binding site" evidence="1">
    <location>
        <begin position="243"/>
        <end position="244"/>
    </location>
    <ligand>
        <name>substrate</name>
    </ligand>
</feature>
<feature type="binding site" evidence="1">
    <location>
        <position position="262"/>
    </location>
    <ligand>
        <name>FMN</name>
        <dbReference type="ChEBI" id="CHEBI:58210"/>
    </ligand>
</feature>
<feature type="binding site" evidence="1">
    <location>
        <position position="291"/>
    </location>
    <ligand>
        <name>FMN</name>
        <dbReference type="ChEBI" id="CHEBI:58210"/>
    </ligand>
</feature>
<feature type="binding site" evidence="1">
    <location>
        <begin position="312"/>
        <end position="313"/>
    </location>
    <ligand>
        <name>FMN</name>
        <dbReference type="ChEBI" id="CHEBI:58210"/>
    </ligand>
</feature>
<feature type="helix" evidence="2">
    <location>
        <begin position="3"/>
        <end position="12"/>
    </location>
</feature>
<feature type="helix" evidence="2">
    <location>
        <begin position="15"/>
        <end position="30"/>
    </location>
</feature>
<feature type="helix" evidence="2">
    <location>
        <begin position="33"/>
        <end position="43"/>
    </location>
</feature>
<feature type="helix" evidence="2">
    <location>
        <begin position="48"/>
        <end position="50"/>
    </location>
</feature>
<feature type="strand" evidence="2">
    <location>
        <begin position="52"/>
        <end position="54"/>
    </location>
</feature>
<feature type="strand" evidence="2">
    <location>
        <begin position="57"/>
        <end position="65"/>
    </location>
</feature>
<feature type="helix" evidence="2">
    <location>
        <begin position="76"/>
        <end position="81"/>
    </location>
</feature>
<feature type="strand" evidence="2">
    <location>
        <begin position="85"/>
        <end position="92"/>
    </location>
</feature>
<feature type="strand" evidence="2">
    <location>
        <begin position="105"/>
        <end position="108"/>
    </location>
</feature>
<feature type="turn" evidence="2">
    <location>
        <begin position="109"/>
        <end position="112"/>
    </location>
</feature>
<feature type="strand" evidence="2">
    <location>
        <begin position="113"/>
        <end position="116"/>
    </location>
</feature>
<feature type="helix" evidence="2">
    <location>
        <begin position="125"/>
        <end position="135"/>
    </location>
</feature>
<feature type="strand" evidence="2">
    <location>
        <begin position="142"/>
        <end position="146"/>
    </location>
</feature>
<feature type="helix" evidence="2">
    <location>
        <begin position="158"/>
        <end position="167"/>
    </location>
</feature>
<feature type="turn" evidence="2">
    <location>
        <begin position="168"/>
        <end position="170"/>
    </location>
</feature>
<feature type="strand" evidence="2">
    <location>
        <begin position="173"/>
        <end position="178"/>
    </location>
</feature>
<feature type="helix" evidence="2">
    <location>
        <begin position="193"/>
        <end position="204"/>
    </location>
</feature>
<feature type="strand" evidence="2">
    <location>
        <begin position="211"/>
        <end position="215"/>
    </location>
</feature>
<feature type="helix" evidence="2">
    <location>
        <begin position="221"/>
        <end position="233"/>
    </location>
</feature>
<feature type="strand" evidence="2">
    <location>
        <begin position="238"/>
        <end position="241"/>
    </location>
</feature>
<feature type="helix" evidence="2">
    <location>
        <begin position="255"/>
        <end position="257"/>
    </location>
</feature>
<feature type="strand" evidence="2">
    <location>
        <begin position="259"/>
        <end position="262"/>
    </location>
</feature>
<feature type="helix" evidence="2">
    <location>
        <begin position="263"/>
        <end position="265"/>
    </location>
</feature>
<feature type="helix" evidence="2">
    <location>
        <begin position="266"/>
        <end position="280"/>
    </location>
</feature>
<feature type="helix" evidence="2">
    <location>
        <begin position="281"/>
        <end position="283"/>
    </location>
</feature>
<feature type="strand" evidence="2">
    <location>
        <begin position="284"/>
        <end position="291"/>
    </location>
</feature>
<feature type="helix" evidence="2">
    <location>
        <begin position="295"/>
        <end position="304"/>
    </location>
</feature>
<feature type="strand" evidence="2">
    <location>
        <begin position="307"/>
        <end position="312"/>
    </location>
</feature>
<feature type="helix" evidence="2">
    <location>
        <begin position="313"/>
        <end position="318"/>
    </location>
</feature>
<feature type="helix" evidence="2">
    <location>
        <begin position="322"/>
        <end position="335"/>
    </location>
</feature>
<feature type="turn" evidence="2">
    <location>
        <begin position="336"/>
        <end position="338"/>
    </location>
</feature>
<feature type="helix" evidence="2">
    <location>
        <begin position="342"/>
        <end position="345"/>
    </location>
</feature>
<sequence length="351" mass="38985">MLYPLVKKYLFSLDAEDAHEKVCKILRTLSKSSFLCSLIHSQWGYKNPKLENEILGLNFPNPLGLAAGFDKNASMLRALIAFGFGYLEAGTLTNEAQVGNERPRLFRHIEEESLQNAMGFNNYGAVLGARSFNRFAPYKTPIGINLGKNKHIEQAHALEDYKAVLNQCLNIGDYYTFNLSSPNTPNLRDLQNKAFVNELFCMAKEMTHKPLFLKIAPDLEIDDMLEIVNSAIEAGAHGIIATNTTIDKSLVFAPKEMGGLSGKCLTKKSREVFKELAKAFFNKSVLVSVGGISDAKEAYERIKMGASLLQIYSAFIYNGPNLCQNILKDLVKLLQKDGFLSVKEAIGADLR</sequence>
<organism>
    <name type="scientific">Helicobacter pylori (strain G27)</name>
    <dbReference type="NCBI Taxonomy" id="563041"/>
    <lineage>
        <taxon>Bacteria</taxon>
        <taxon>Pseudomonadati</taxon>
        <taxon>Campylobacterota</taxon>
        <taxon>Epsilonproteobacteria</taxon>
        <taxon>Campylobacterales</taxon>
        <taxon>Helicobacteraceae</taxon>
        <taxon>Helicobacter</taxon>
    </lineage>
</organism>